<proteinExistence type="inferred from homology"/>
<dbReference type="EMBL" id="CR954253">
    <property type="protein sequence ID" value="CAI97451.1"/>
    <property type="status" value="ALT_INIT"/>
    <property type="molecule type" value="Genomic_DNA"/>
</dbReference>
<dbReference type="SMR" id="Q1GB34"/>
<dbReference type="STRING" id="390333.Ldb0621"/>
<dbReference type="KEGG" id="ldb:Ldb0621"/>
<dbReference type="eggNOG" id="COG1660">
    <property type="taxonomic scope" value="Bacteria"/>
</dbReference>
<dbReference type="HOGENOM" id="CLU_059558_0_0_9"/>
<dbReference type="BioCyc" id="LDEL390333:LDB_RS02685-MONOMER"/>
<dbReference type="Proteomes" id="UP000001259">
    <property type="component" value="Chromosome"/>
</dbReference>
<dbReference type="GO" id="GO:0005524">
    <property type="term" value="F:ATP binding"/>
    <property type="evidence" value="ECO:0007669"/>
    <property type="project" value="UniProtKB-UniRule"/>
</dbReference>
<dbReference type="GO" id="GO:0005525">
    <property type="term" value="F:GTP binding"/>
    <property type="evidence" value="ECO:0007669"/>
    <property type="project" value="UniProtKB-UniRule"/>
</dbReference>
<dbReference type="Gene3D" id="3.40.50.300">
    <property type="entry name" value="P-loop containing nucleotide triphosphate hydrolases"/>
    <property type="match status" value="1"/>
</dbReference>
<dbReference type="HAMAP" id="MF_00636">
    <property type="entry name" value="RapZ_like"/>
    <property type="match status" value="1"/>
</dbReference>
<dbReference type="InterPro" id="IPR027417">
    <property type="entry name" value="P-loop_NTPase"/>
</dbReference>
<dbReference type="InterPro" id="IPR005337">
    <property type="entry name" value="RapZ-like"/>
</dbReference>
<dbReference type="InterPro" id="IPR053930">
    <property type="entry name" value="RapZ-like_N"/>
</dbReference>
<dbReference type="InterPro" id="IPR053931">
    <property type="entry name" value="RapZ_C"/>
</dbReference>
<dbReference type="NCBIfam" id="NF003828">
    <property type="entry name" value="PRK05416.1"/>
    <property type="match status" value="1"/>
</dbReference>
<dbReference type="PANTHER" id="PTHR30448">
    <property type="entry name" value="RNASE ADAPTER PROTEIN RAPZ"/>
    <property type="match status" value="1"/>
</dbReference>
<dbReference type="PANTHER" id="PTHR30448:SF0">
    <property type="entry name" value="RNASE ADAPTER PROTEIN RAPZ"/>
    <property type="match status" value="1"/>
</dbReference>
<dbReference type="Pfam" id="PF22740">
    <property type="entry name" value="PapZ_C"/>
    <property type="match status" value="1"/>
</dbReference>
<dbReference type="Pfam" id="PF03668">
    <property type="entry name" value="RapZ-like_N"/>
    <property type="match status" value="1"/>
</dbReference>
<dbReference type="PIRSF" id="PIRSF005052">
    <property type="entry name" value="P-loopkin"/>
    <property type="match status" value="1"/>
</dbReference>
<dbReference type="SUPFAM" id="SSF52540">
    <property type="entry name" value="P-loop containing nucleoside triphosphate hydrolases"/>
    <property type="match status" value="1"/>
</dbReference>
<reference key="1">
    <citation type="journal article" date="2006" name="Proc. Natl. Acad. Sci. U.S.A.">
        <title>The complete genome sequence of Lactobacillus bulgaricus reveals extensive and ongoing reductive evolution.</title>
        <authorList>
            <person name="van de Guchte M."/>
            <person name="Penaud S."/>
            <person name="Grimaldi C."/>
            <person name="Barbe V."/>
            <person name="Bryson K."/>
            <person name="Nicolas P."/>
            <person name="Robert C."/>
            <person name="Oztas S."/>
            <person name="Mangenot S."/>
            <person name="Couloux A."/>
            <person name="Loux V."/>
            <person name="Dervyn R."/>
            <person name="Bossy R."/>
            <person name="Bolotin A."/>
            <person name="Batto J.-M."/>
            <person name="Walunas T."/>
            <person name="Gibrat J.-F."/>
            <person name="Bessieres P."/>
            <person name="Weissenbach J."/>
            <person name="Ehrlich S.D."/>
            <person name="Maguin E."/>
        </authorList>
    </citation>
    <scope>NUCLEOTIDE SEQUENCE [LARGE SCALE GENOMIC DNA]</scope>
    <source>
        <strain>ATCC 11842 / DSM 20081 / BCRC 10696 / JCM 1002 / NBRC 13953 / NCIMB 11778 / NCTC 12712 / WDCM 00102 / Lb 14</strain>
    </source>
</reference>
<accession>Q1GB34</accession>
<name>Y621_LACDA</name>
<comment type="function">
    <text evidence="1">Displays ATPase and GTPase activities.</text>
</comment>
<comment type="similarity">
    <text evidence="1">Belongs to the RapZ-like family.</text>
</comment>
<comment type="sequence caution" evidence="2">
    <conflict type="erroneous initiation">
        <sequence resource="EMBL-CDS" id="CAI97451"/>
    </conflict>
</comment>
<gene>
    <name type="ordered locus">Ldb0621</name>
</gene>
<evidence type="ECO:0000255" key="1">
    <source>
        <dbReference type="HAMAP-Rule" id="MF_00636"/>
    </source>
</evidence>
<evidence type="ECO:0000305" key="2"/>
<protein>
    <recommendedName>
        <fullName evidence="1">Nucleotide-binding protein Ldb0621</fullName>
    </recommendedName>
</protein>
<feature type="chain" id="PRO_0000258968" description="Nucleotide-binding protein Ldb0621">
    <location>
        <begin position="1"/>
        <end position="292"/>
    </location>
</feature>
<feature type="binding site" evidence="1">
    <location>
        <begin position="14"/>
        <end position="21"/>
    </location>
    <ligand>
        <name>ATP</name>
        <dbReference type="ChEBI" id="CHEBI:30616"/>
    </ligand>
</feature>
<feature type="binding site" evidence="1">
    <location>
        <begin position="64"/>
        <end position="67"/>
    </location>
    <ligand>
        <name>GTP</name>
        <dbReference type="ChEBI" id="CHEBI:37565"/>
    </ligand>
</feature>
<organism>
    <name type="scientific">Lactobacillus delbrueckii subsp. bulgaricus (strain ATCC 11842 / DSM 20081 / BCRC 10696 / JCM 1002 / NBRC 13953 / NCIMB 11778 / NCTC 12712 / WDCM 00102 / Lb 14)</name>
    <dbReference type="NCBI Taxonomy" id="390333"/>
    <lineage>
        <taxon>Bacteria</taxon>
        <taxon>Bacillati</taxon>
        <taxon>Bacillota</taxon>
        <taxon>Bacilli</taxon>
        <taxon>Lactobacillales</taxon>
        <taxon>Lactobacillaceae</taxon>
        <taxon>Lactobacillus</taxon>
    </lineage>
</organism>
<sequence>MHEKYKKQLLILTGMSGAGKTVAAHSLEDVGYFVVDNLPPELLGNFWDLMNTSEDFEKVAVVIDLRVKSFYKDLIDEINSLEDSGQTQATIVFLEASDDTLVARYKETRRLPPLAENGRLLDGIRDERRILTPVRNRSNYILDTSKMTTKELKQKLQSKFGELHKPKFGIEVMSFGFKYGMPIDADIVMDVRFLPNPFYIPELRPFTGLDKRVFNYVMDKDETKVFYGKLLDLLLTAIPGYIDEGKEKLTIAIGCTGGQHRSVSIAQQLARDLSEKYPVDITHREISRYLRK</sequence>
<keyword id="KW-0067">ATP-binding</keyword>
<keyword id="KW-0342">GTP-binding</keyword>
<keyword id="KW-0547">Nucleotide-binding</keyword>
<keyword id="KW-1185">Reference proteome</keyword>